<evidence type="ECO:0000255" key="1">
    <source>
        <dbReference type="HAMAP-Rule" id="MF_01855"/>
    </source>
</evidence>
<keyword id="KW-0119">Carbohydrate metabolism</keyword>
<keyword id="KW-0963">Cytoplasm</keyword>
<keyword id="KW-0378">Hydrolase</keyword>
<keyword id="KW-0460">Magnesium</keyword>
<keyword id="KW-0479">Metal-binding</keyword>
<keyword id="KW-0614">Plasmid</keyword>
<keyword id="KW-1185">Reference proteome</keyword>
<accession>P19912</accession>
<gene>
    <name evidence="1" type="primary">fbp3</name>
    <name type="synonym">cbbFP</name>
    <name type="synonym">cfxF</name>
    <name type="ordered locus">PHG422</name>
</gene>
<feature type="chain" id="PRO_0000200480" description="Fructose-1,6-bisphosphatase class 1 3">
    <location>
        <begin position="1"/>
        <end position="364"/>
    </location>
</feature>
<feature type="binding site" evidence="1">
    <location>
        <position position="101"/>
    </location>
    <ligand>
        <name>Mg(2+)</name>
        <dbReference type="ChEBI" id="CHEBI:18420"/>
        <label>1</label>
    </ligand>
</feature>
<feature type="binding site" evidence="1">
    <location>
        <position position="123"/>
    </location>
    <ligand>
        <name>Mg(2+)</name>
        <dbReference type="ChEBI" id="CHEBI:18420"/>
        <label>1</label>
    </ligand>
</feature>
<feature type="binding site" evidence="1">
    <location>
        <position position="123"/>
    </location>
    <ligand>
        <name>Mg(2+)</name>
        <dbReference type="ChEBI" id="CHEBI:18420"/>
        <label>2</label>
    </ligand>
</feature>
<feature type="binding site" evidence="1">
    <location>
        <position position="125"/>
    </location>
    <ligand>
        <name>Mg(2+)</name>
        <dbReference type="ChEBI" id="CHEBI:18420"/>
        <label>1</label>
    </ligand>
</feature>
<feature type="binding site" evidence="1">
    <location>
        <begin position="126"/>
        <end position="129"/>
    </location>
    <ligand>
        <name>substrate</name>
    </ligand>
</feature>
<feature type="binding site" evidence="1">
    <location>
        <position position="126"/>
    </location>
    <ligand>
        <name>Mg(2+)</name>
        <dbReference type="ChEBI" id="CHEBI:18420"/>
        <label>2</label>
    </ligand>
</feature>
<feature type="binding site" evidence="1">
    <location>
        <position position="218"/>
    </location>
    <ligand>
        <name>substrate</name>
    </ligand>
</feature>
<feature type="binding site" evidence="1">
    <location>
        <position position="290"/>
    </location>
    <ligand>
        <name>Mg(2+)</name>
        <dbReference type="ChEBI" id="CHEBI:18420"/>
        <label>2</label>
    </ligand>
</feature>
<protein>
    <recommendedName>
        <fullName evidence="1">Fructose-1,6-bisphosphatase class 1 3</fullName>
        <shortName evidence="1">FBPase class 1 3</shortName>
        <ecNumber evidence="1">3.1.3.11</ecNumber>
    </recommendedName>
    <alternativeName>
        <fullName evidence="1">D-fructose-1,6-bisphosphate 1-phosphohydrolase class 1 3</fullName>
    </alternativeName>
</protein>
<proteinExistence type="inferred from homology"/>
<reference key="1">
    <citation type="journal article" date="1995" name="Curr. Microbiol.">
        <title>Analysis of the cbbF genes from Alcaligenes eutrophus that encode fructose-1,6-/sedoheptulose-1,7-bisphosphatase.</title>
        <authorList>
            <person name="Yoo J.-G."/>
            <person name="Bowien B."/>
        </authorList>
    </citation>
    <scope>NUCLEOTIDE SEQUENCE [GENOMIC DNA]</scope>
</reference>
<reference key="2">
    <citation type="journal article" date="2003" name="J. Mol. Biol.">
        <title>Complete nucleotide sequence of pHG1: a Ralstonia eutropha H16 megaplasmid encoding key enzymes of H(2)-based lithoautotrophy and anaerobiosis.</title>
        <authorList>
            <person name="Schwartz E."/>
            <person name="Henne A."/>
            <person name="Cramm R."/>
            <person name="Eitinger T."/>
            <person name="Friedrich B."/>
            <person name="Gottschalk G."/>
        </authorList>
    </citation>
    <scope>NUCLEOTIDE SEQUENCE [LARGE SCALE GENOMIC DNA]</scope>
    <source>
        <strain>ATCC 17699 / DSM 428 / KCTC 22496 / NCIMB 10442 / H16 / Stanier 337</strain>
    </source>
</reference>
<reference key="3">
    <citation type="journal article" date="1989" name="Gene">
        <title>Sequence analysis of the chromosomal and plasmid genes encoding phosphoribulokinase from Alcaligenes eutrophus.</title>
        <authorList>
            <person name="Kossmann J."/>
            <person name="Klintworth R."/>
            <person name="Bowien B."/>
        </authorList>
    </citation>
    <scope>NUCLEOTIDE SEQUENCE [GENOMIC DNA] OF 159-364</scope>
</reference>
<organism>
    <name type="scientific">Cupriavidus necator (strain ATCC 17699 / DSM 428 / KCTC 22496 / NCIMB 10442 / H16 / Stanier 337)</name>
    <name type="common">Ralstonia eutropha</name>
    <dbReference type="NCBI Taxonomy" id="381666"/>
    <lineage>
        <taxon>Bacteria</taxon>
        <taxon>Pseudomonadati</taxon>
        <taxon>Pseudomonadota</taxon>
        <taxon>Betaproteobacteria</taxon>
        <taxon>Burkholderiales</taxon>
        <taxon>Burkholderiaceae</taxon>
        <taxon>Cupriavidus</taxon>
    </lineage>
</organism>
<comment type="catalytic activity">
    <reaction evidence="1">
        <text>beta-D-fructose 1,6-bisphosphate + H2O = beta-D-fructose 6-phosphate + phosphate</text>
        <dbReference type="Rhea" id="RHEA:11064"/>
        <dbReference type="ChEBI" id="CHEBI:15377"/>
        <dbReference type="ChEBI" id="CHEBI:32966"/>
        <dbReference type="ChEBI" id="CHEBI:43474"/>
        <dbReference type="ChEBI" id="CHEBI:57634"/>
        <dbReference type="EC" id="3.1.3.11"/>
    </reaction>
</comment>
<comment type="cofactor">
    <cofactor evidence="1">
        <name>Mg(2+)</name>
        <dbReference type="ChEBI" id="CHEBI:18420"/>
    </cofactor>
    <text evidence="1">Binds 2 magnesium ions per subunit.</text>
</comment>
<comment type="pathway">
    <text evidence="1">Carbohydrate biosynthesis; gluconeogenesis.</text>
</comment>
<comment type="subunit">
    <text evidence="1">Homotetramer.</text>
</comment>
<comment type="subcellular location">
    <subcellularLocation>
        <location evidence="1">Cytoplasm</location>
    </subcellularLocation>
</comment>
<comment type="similarity">
    <text evidence="1">Belongs to the FBPase class 1 family.</text>
</comment>
<sequence length="364" mass="39777">MPEVQRMTLTQFLIEERRRYPDASGGFNGLILNVAMACKEIARAVAFGALGGLHGKASTQAGEEGAVNVQGEIQQKLDVLSNTTFLRVNEWGGYLAGMASEEMEAPYQIPENYPRGKYLLVFDPLDGSSNIDVNVSVGSIFSVLRAPEGADTVTEQDFLQPGSAQVAAGYALYGPTTMLVLTVGNGVNGFTLDPNLGEFFLTHPHLRVPPDTQEFAINASNSRFWEAPVQRYIGECMAGKSGPRGKDFNMRWIASMVAEAHRILMRGGVFMYPRDTKDPAKPGRLRLLYEANPIAFLMEQAGGRASTGRQTLMSVAPGALHQRIGVIFGSRNEVERIEGYHTNQTDPDLPSPLFNERSLFRASA</sequence>
<dbReference type="EC" id="3.1.3.11" evidence="1"/>
<dbReference type="EMBL" id="U16792">
    <property type="protein sequence ID" value="AAA69974.1"/>
    <property type="molecule type" value="Genomic_DNA"/>
</dbReference>
<dbReference type="EMBL" id="AY305378">
    <property type="protein sequence ID" value="AAP86171.1"/>
    <property type="molecule type" value="Genomic_DNA"/>
</dbReference>
<dbReference type="EMBL" id="M33562">
    <property type="protein sequence ID" value="AAA21956.1"/>
    <property type="molecule type" value="Genomic_DNA"/>
</dbReference>
<dbReference type="PIR" id="I39525">
    <property type="entry name" value="I39525"/>
</dbReference>
<dbReference type="RefSeq" id="WP_011154334.1">
    <property type="nucleotide sequence ID" value="NC_005241.1"/>
</dbReference>
<dbReference type="SMR" id="P19912"/>
<dbReference type="KEGG" id="reh:PHG422"/>
<dbReference type="PATRIC" id="fig|381666.6.peg.350"/>
<dbReference type="eggNOG" id="COG0158">
    <property type="taxonomic scope" value="Bacteria"/>
</dbReference>
<dbReference type="HOGENOM" id="CLU_039977_0_0_4"/>
<dbReference type="OrthoDB" id="9806756at2"/>
<dbReference type="UniPathway" id="UPA00138"/>
<dbReference type="Proteomes" id="UP000008210">
    <property type="component" value="Plasmid megaplasmid pHG1"/>
</dbReference>
<dbReference type="GO" id="GO:0005829">
    <property type="term" value="C:cytosol"/>
    <property type="evidence" value="ECO:0007669"/>
    <property type="project" value="TreeGrafter"/>
</dbReference>
<dbReference type="GO" id="GO:0042132">
    <property type="term" value="F:fructose 1,6-bisphosphate 1-phosphatase activity"/>
    <property type="evidence" value="ECO:0007669"/>
    <property type="project" value="UniProtKB-UniRule"/>
</dbReference>
<dbReference type="GO" id="GO:0000287">
    <property type="term" value="F:magnesium ion binding"/>
    <property type="evidence" value="ECO:0007669"/>
    <property type="project" value="UniProtKB-UniRule"/>
</dbReference>
<dbReference type="GO" id="GO:0030388">
    <property type="term" value="P:fructose 1,6-bisphosphate metabolic process"/>
    <property type="evidence" value="ECO:0007669"/>
    <property type="project" value="TreeGrafter"/>
</dbReference>
<dbReference type="GO" id="GO:0006002">
    <property type="term" value="P:fructose 6-phosphate metabolic process"/>
    <property type="evidence" value="ECO:0007669"/>
    <property type="project" value="TreeGrafter"/>
</dbReference>
<dbReference type="GO" id="GO:0006000">
    <property type="term" value="P:fructose metabolic process"/>
    <property type="evidence" value="ECO:0007669"/>
    <property type="project" value="TreeGrafter"/>
</dbReference>
<dbReference type="GO" id="GO:0006094">
    <property type="term" value="P:gluconeogenesis"/>
    <property type="evidence" value="ECO:0007669"/>
    <property type="project" value="UniProtKB-UniRule"/>
</dbReference>
<dbReference type="GO" id="GO:0005986">
    <property type="term" value="P:sucrose biosynthetic process"/>
    <property type="evidence" value="ECO:0007669"/>
    <property type="project" value="TreeGrafter"/>
</dbReference>
<dbReference type="CDD" id="cd00354">
    <property type="entry name" value="FBPase"/>
    <property type="match status" value="1"/>
</dbReference>
<dbReference type="FunFam" id="3.30.540.10:FF:000002">
    <property type="entry name" value="Fructose-1,6-bisphosphatase class 1"/>
    <property type="match status" value="1"/>
</dbReference>
<dbReference type="FunFam" id="3.40.190.80:FF:000011">
    <property type="entry name" value="Fructose-1,6-bisphosphatase class 1"/>
    <property type="match status" value="1"/>
</dbReference>
<dbReference type="Gene3D" id="3.40.190.80">
    <property type="match status" value="1"/>
</dbReference>
<dbReference type="Gene3D" id="3.30.540.10">
    <property type="entry name" value="Fructose-1,6-Bisphosphatase, subunit A, domain 1"/>
    <property type="match status" value="1"/>
</dbReference>
<dbReference type="HAMAP" id="MF_01855">
    <property type="entry name" value="FBPase_class1"/>
    <property type="match status" value="1"/>
</dbReference>
<dbReference type="InterPro" id="IPR044015">
    <property type="entry name" value="FBPase_C_dom"/>
</dbReference>
<dbReference type="InterPro" id="IPR000146">
    <property type="entry name" value="FBPase_class-1"/>
</dbReference>
<dbReference type="InterPro" id="IPR033391">
    <property type="entry name" value="FBPase_N"/>
</dbReference>
<dbReference type="InterPro" id="IPR028343">
    <property type="entry name" value="FBPtase"/>
</dbReference>
<dbReference type="InterPro" id="IPR020548">
    <property type="entry name" value="Fructose_bisphosphatase_AS"/>
</dbReference>
<dbReference type="NCBIfam" id="NF006779">
    <property type="entry name" value="PRK09293.1-3"/>
    <property type="match status" value="1"/>
</dbReference>
<dbReference type="NCBIfam" id="NF006780">
    <property type="entry name" value="PRK09293.1-4"/>
    <property type="match status" value="1"/>
</dbReference>
<dbReference type="PANTHER" id="PTHR11556">
    <property type="entry name" value="FRUCTOSE-1,6-BISPHOSPHATASE-RELATED"/>
    <property type="match status" value="1"/>
</dbReference>
<dbReference type="PANTHER" id="PTHR11556:SF35">
    <property type="entry name" value="SEDOHEPTULOSE-1,7-BISPHOSPHATASE, CHLOROPLASTIC"/>
    <property type="match status" value="1"/>
</dbReference>
<dbReference type="Pfam" id="PF00316">
    <property type="entry name" value="FBPase"/>
    <property type="match status" value="1"/>
</dbReference>
<dbReference type="Pfam" id="PF18913">
    <property type="entry name" value="FBPase_C"/>
    <property type="match status" value="1"/>
</dbReference>
<dbReference type="PIRSF" id="PIRSF500210">
    <property type="entry name" value="FBPtase"/>
    <property type="match status" value="1"/>
</dbReference>
<dbReference type="PIRSF" id="PIRSF000904">
    <property type="entry name" value="FBPtase_SBPase"/>
    <property type="match status" value="1"/>
</dbReference>
<dbReference type="PRINTS" id="PR00115">
    <property type="entry name" value="F16BPHPHTASE"/>
</dbReference>
<dbReference type="SUPFAM" id="SSF56655">
    <property type="entry name" value="Carbohydrate phosphatase"/>
    <property type="match status" value="1"/>
</dbReference>
<dbReference type="PROSITE" id="PS00124">
    <property type="entry name" value="FBPASE"/>
    <property type="match status" value="1"/>
</dbReference>
<geneLocation type="plasmid">
    <name>megaplasmid pHG1</name>
</geneLocation>
<name>F16A3_CUPNH</name>